<reference key="1">
    <citation type="journal article" date="2005" name="J. Bacteriol.">
        <title>Insights into genome plasticity and pathogenicity of the plant pathogenic Bacterium Xanthomonas campestris pv. vesicatoria revealed by the complete genome sequence.</title>
        <authorList>
            <person name="Thieme F."/>
            <person name="Koebnik R."/>
            <person name="Bekel T."/>
            <person name="Berger C."/>
            <person name="Boch J."/>
            <person name="Buettner D."/>
            <person name="Caldana C."/>
            <person name="Gaigalat L."/>
            <person name="Goesmann A."/>
            <person name="Kay S."/>
            <person name="Kirchner O."/>
            <person name="Lanz C."/>
            <person name="Linke B."/>
            <person name="McHardy A.C."/>
            <person name="Meyer F."/>
            <person name="Mittenhuber G."/>
            <person name="Nies D.H."/>
            <person name="Niesbach-Kloesgen U."/>
            <person name="Patschkowski T."/>
            <person name="Rueckert C."/>
            <person name="Rupp O."/>
            <person name="Schneiker S."/>
            <person name="Schuster S.C."/>
            <person name="Vorhoelter F.J."/>
            <person name="Weber E."/>
            <person name="Puehler A."/>
            <person name="Bonas U."/>
            <person name="Bartels D."/>
            <person name="Kaiser O."/>
        </authorList>
    </citation>
    <scope>NUCLEOTIDE SEQUENCE [LARGE SCALE GENOMIC DNA]</scope>
    <source>
        <strain>85-10</strain>
    </source>
</reference>
<name>RL21_XANE5</name>
<sequence length="106" mass="11798">MYAVLVTGGKQYRVAQGETLRVEKLEVEAGNEIKFDTILMLGDSDGIKLGDALKGASVTAKVVAHGRADKVRIIKFRRRKHHMKRQGHRQHYTEIEITGIAGGDKK</sequence>
<proteinExistence type="inferred from homology"/>
<gene>
    <name evidence="1" type="primary">rplU</name>
    <name type="ordered locus">XCV1284</name>
</gene>
<feature type="chain" id="PRO_0000269430" description="Large ribosomal subunit protein bL21">
    <location>
        <begin position="1"/>
        <end position="106"/>
    </location>
</feature>
<protein>
    <recommendedName>
        <fullName evidence="1">Large ribosomal subunit protein bL21</fullName>
    </recommendedName>
    <alternativeName>
        <fullName evidence="2">50S ribosomal protein L21</fullName>
    </alternativeName>
</protein>
<accession>Q3BW48</accession>
<evidence type="ECO:0000255" key="1">
    <source>
        <dbReference type="HAMAP-Rule" id="MF_01363"/>
    </source>
</evidence>
<evidence type="ECO:0000305" key="2"/>
<organism>
    <name type="scientific">Xanthomonas euvesicatoria pv. vesicatoria (strain 85-10)</name>
    <name type="common">Xanthomonas campestris pv. vesicatoria</name>
    <dbReference type="NCBI Taxonomy" id="316273"/>
    <lineage>
        <taxon>Bacteria</taxon>
        <taxon>Pseudomonadati</taxon>
        <taxon>Pseudomonadota</taxon>
        <taxon>Gammaproteobacteria</taxon>
        <taxon>Lysobacterales</taxon>
        <taxon>Lysobacteraceae</taxon>
        <taxon>Xanthomonas</taxon>
    </lineage>
</organism>
<keyword id="KW-0687">Ribonucleoprotein</keyword>
<keyword id="KW-0689">Ribosomal protein</keyword>
<keyword id="KW-0694">RNA-binding</keyword>
<keyword id="KW-0699">rRNA-binding</keyword>
<comment type="function">
    <text evidence="1">This protein binds to 23S rRNA in the presence of protein L20.</text>
</comment>
<comment type="subunit">
    <text evidence="1">Part of the 50S ribosomal subunit. Contacts protein L20.</text>
</comment>
<comment type="similarity">
    <text evidence="1">Belongs to the bacterial ribosomal protein bL21 family.</text>
</comment>
<dbReference type="EMBL" id="AM039952">
    <property type="protein sequence ID" value="CAJ22915.1"/>
    <property type="molecule type" value="Genomic_DNA"/>
</dbReference>
<dbReference type="RefSeq" id="WP_003484328.1">
    <property type="nucleotide sequence ID" value="NZ_CP017190.1"/>
</dbReference>
<dbReference type="SMR" id="Q3BW48"/>
<dbReference type="STRING" id="456327.BJD11_16195"/>
<dbReference type="GeneID" id="97509598"/>
<dbReference type="KEGG" id="xcv:XCV1284"/>
<dbReference type="eggNOG" id="COG0261">
    <property type="taxonomic scope" value="Bacteria"/>
</dbReference>
<dbReference type="HOGENOM" id="CLU_061463_3_3_6"/>
<dbReference type="Proteomes" id="UP000007069">
    <property type="component" value="Chromosome"/>
</dbReference>
<dbReference type="GO" id="GO:0005737">
    <property type="term" value="C:cytoplasm"/>
    <property type="evidence" value="ECO:0007669"/>
    <property type="project" value="UniProtKB-ARBA"/>
</dbReference>
<dbReference type="GO" id="GO:1990904">
    <property type="term" value="C:ribonucleoprotein complex"/>
    <property type="evidence" value="ECO:0007669"/>
    <property type="project" value="UniProtKB-KW"/>
</dbReference>
<dbReference type="GO" id="GO:0005840">
    <property type="term" value="C:ribosome"/>
    <property type="evidence" value="ECO:0007669"/>
    <property type="project" value="UniProtKB-KW"/>
</dbReference>
<dbReference type="GO" id="GO:0019843">
    <property type="term" value="F:rRNA binding"/>
    <property type="evidence" value="ECO:0007669"/>
    <property type="project" value="UniProtKB-UniRule"/>
</dbReference>
<dbReference type="GO" id="GO:0003735">
    <property type="term" value="F:structural constituent of ribosome"/>
    <property type="evidence" value="ECO:0007669"/>
    <property type="project" value="InterPro"/>
</dbReference>
<dbReference type="GO" id="GO:0006412">
    <property type="term" value="P:translation"/>
    <property type="evidence" value="ECO:0007669"/>
    <property type="project" value="UniProtKB-UniRule"/>
</dbReference>
<dbReference type="HAMAP" id="MF_01363">
    <property type="entry name" value="Ribosomal_bL21"/>
    <property type="match status" value="1"/>
</dbReference>
<dbReference type="InterPro" id="IPR028909">
    <property type="entry name" value="bL21-like"/>
</dbReference>
<dbReference type="InterPro" id="IPR036164">
    <property type="entry name" value="bL21-like_sf"/>
</dbReference>
<dbReference type="InterPro" id="IPR001787">
    <property type="entry name" value="Ribosomal_bL21"/>
</dbReference>
<dbReference type="InterPro" id="IPR018258">
    <property type="entry name" value="Ribosomal_bL21_CS"/>
</dbReference>
<dbReference type="NCBIfam" id="TIGR00061">
    <property type="entry name" value="L21"/>
    <property type="match status" value="1"/>
</dbReference>
<dbReference type="PANTHER" id="PTHR21349">
    <property type="entry name" value="50S RIBOSOMAL PROTEIN L21"/>
    <property type="match status" value="1"/>
</dbReference>
<dbReference type="PANTHER" id="PTHR21349:SF0">
    <property type="entry name" value="LARGE RIBOSOMAL SUBUNIT PROTEIN BL21M"/>
    <property type="match status" value="1"/>
</dbReference>
<dbReference type="Pfam" id="PF00829">
    <property type="entry name" value="Ribosomal_L21p"/>
    <property type="match status" value="1"/>
</dbReference>
<dbReference type="SUPFAM" id="SSF141091">
    <property type="entry name" value="L21p-like"/>
    <property type="match status" value="1"/>
</dbReference>
<dbReference type="PROSITE" id="PS01169">
    <property type="entry name" value="RIBOSOMAL_L21"/>
    <property type="match status" value="1"/>
</dbReference>